<dbReference type="EMBL" id="CP000090">
    <property type="protein sequence ID" value="AAZ59689.1"/>
    <property type="molecule type" value="Genomic_DNA"/>
</dbReference>
<dbReference type="SMR" id="Q476J4"/>
<dbReference type="STRING" id="264198.Reut_A0307"/>
<dbReference type="KEGG" id="reu:Reut_A0307"/>
<dbReference type="eggNOG" id="COG1952">
    <property type="taxonomic scope" value="Bacteria"/>
</dbReference>
<dbReference type="HOGENOM" id="CLU_111574_1_0_4"/>
<dbReference type="OrthoDB" id="9795145at2"/>
<dbReference type="GO" id="GO:0005737">
    <property type="term" value="C:cytoplasm"/>
    <property type="evidence" value="ECO:0007669"/>
    <property type="project" value="UniProtKB-SubCell"/>
</dbReference>
<dbReference type="GO" id="GO:0051082">
    <property type="term" value="F:unfolded protein binding"/>
    <property type="evidence" value="ECO:0007669"/>
    <property type="project" value="InterPro"/>
</dbReference>
<dbReference type="GO" id="GO:0006457">
    <property type="term" value="P:protein folding"/>
    <property type="evidence" value="ECO:0007669"/>
    <property type="project" value="UniProtKB-UniRule"/>
</dbReference>
<dbReference type="GO" id="GO:0051262">
    <property type="term" value="P:protein tetramerization"/>
    <property type="evidence" value="ECO:0007669"/>
    <property type="project" value="InterPro"/>
</dbReference>
<dbReference type="GO" id="GO:0015031">
    <property type="term" value="P:protein transport"/>
    <property type="evidence" value="ECO:0007669"/>
    <property type="project" value="UniProtKB-UniRule"/>
</dbReference>
<dbReference type="Gene3D" id="3.10.420.10">
    <property type="entry name" value="SecB-like"/>
    <property type="match status" value="1"/>
</dbReference>
<dbReference type="HAMAP" id="MF_00821">
    <property type="entry name" value="SecB"/>
    <property type="match status" value="1"/>
</dbReference>
<dbReference type="InterPro" id="IPR003708">
    <property type="entry name" value="SecB"/>
</dbReference>
<dbReference type="InterPro" id="IPR035958">
    <property type="entry name" value="SecB-like_sf"/>
</dbReference>
<dbReference type="NCBIfam" id="NF004394">
    <property type="entry name" value="PRK05751.1-5"/>
    <property type="match status" value="1"/>
</dbReference>
<dbReference type="NCBIfam" id="TIGR00809">
    <property type="entry name" value="secB"/>
    <property type="match status" value="1"/>
</dbReference>
<dbReference type="PANTHER" id="PTHR36918">
    <property type="match status" value="1"/>
</dbReference>
<dbReference type="PANTHER" id="PTHR36918:SF1">
    <property type="entry name" value="PROTEIN-EXPORT PROTEIN SECB"/>
    <property type="match status" value="1"/>
</dbReference>
<dbReference type="Pfam" id="PF02556">
    <property type="entry name" value="SecB"/>
    <property type="match status" value="1"/>
</dbReference>
<dbReference type="PRINTS" id="PR01594">
    <property type="entry name" value="SECBCHAPRONE"/>
</dbReference>
<dbReference type="SUPFAM" id="SSF54611">
    <property type="entry name" value="SecB-like"/>
    <property type="match status" value="1"/>
</dbReference>
<proteinExistence type="inferred from homology"/>
<keyword id="KW-0143">Chaperone</keyword>
<keyword id="KW-0963">Cytoplasm</keyword>
<keyword id="KW-0653">Protein transport</keyword>
<keyword id="KW-0811">Translocation</keyword>
<keyword id="KW-0813">Transport</keyword>
<protein>
    <recommendedName>
        <fullName evidence="1">Protein-export protein SecB</fullName>
    </recommendedName>
</protein>
<sequence length="172" mass="18857">MSDQQNTQQEDQPFFNIQRVYLKDMSLEQPNSPGIFLESEAPSVEVQVNVAASQLQEGIFEVVVTGTVTTKVQEKVAFLVEAHQAGIFDIRNVPVEQLDPLLGIACPTILYPYLRGNIADVITRAGFQAIHLSEINFQALYEQRLQAAMEEAQAAGGANSGIVMPDGSQARH</sequence>
<gene>
    <name evidence="1" type="primary">secB</name>
    <name type="ordered locus">Reut_A0307</name>
</gene>
<organism>
    <name type="scientific">Cupriavidus pinatubonensis (strain JMP 134 / LMG 1197)</name>
    <name type="common">Cupriavidus necator (strain JMP 134)</name>
    <dbReference type="NCBI Taxonomy" id="264198"/>
    <lineage>
        <taxon>Bacteria</taxon>
        <taxon>Pseudomonadati</taxon>
        <taxon>Pseudomonadota</taxon>
        <taxon>Betaproteobacteria</taxon>
        <taxon>Burkholderiales</taxon>
        <taxon>Burkholderiaceae</taxon>
        <taxon>Cupriavidus</taxon>
    </lineage>
</organism>
<comment type="function">
    <text evidence="1">One of the proteins required for the normal export of preproteins out of the cell cytoplasm. It is a molecular chaperone that binds to a subset of precursor proteins, maintaining them in a translocation-competent state. It also specifically binds to its receptor SecA.</text>
</comment>
<comment type="subunit">
    <text evidence="1">Homotetramer, a dimer of dimers. One homotetramer interacts with 1 SecA dimer.</text>
</comment>
<comment type="subcellular location">
    <subcellularLocation>
        <location evidence="1">Cytoplasm</location>
    </subcellularLocation>
</comment>
<comment type="similarity">
    <text evidence="1">Belongs to the SecB family.</text>
</comment>
<evidence type="ECO:0000255" key="1">
    <source>
        <dbReference type="HAMAP-Rule" id="MF_00821"/>
    </source>
</evidence>
<feature type="chain" id="PRO_0000055403" description="Protein-export protein SecB">
    <location>
        <begin position="1"/>
        <end position="172"/>
    </location>
</feature>
<accession>Q476J4</accession>
<name>SECB_CUPPJ</name>
<reference key="1">
    <citation type="journal article" date="2010" name="PLoS ONE">
        <title>The complete multipartite genome sequence of Cupriavidus necator JMP134, a versatile pollutant degrader.</title>
        <authorList>
            <person name="Lykidis A."/>
            <person name="Perez-Pantoja D."/>
            <person name="Ledger T."/>
            <person name="Mavromatis K."/>
            <person name="Anderson I.J."/>
            <person name="Ivanova N.N."/>
            <person name="Hooper S.D."/>
            <person name="Lapidus A."/>
            <person name="Lucas S."/>
            <person name="Gonzalez B."/>
            <person name="Kyrpides N.C."/>
        </authorList>
    </citation>
    <scope>NUCLEOTIDE SEQUENCE [LARGE SCALE GENOMIC DNA]</scope>
    <source>
        <strain>JMP134 / LMG 1197</strain>
    </source>
</reference>